<protein>
    <recommendedName>
        <fullName>Replication protein A 32 kDa subunit</fullName>
        <shortName>RP-A p32</shortName>
    </recommendedName>
    <alternativeName>
        <fullName>Replication factor A protein 2</fullName>
        <shortName>RF-A protein 2</shortName>
    </alternativeName>
    <alternativeName>
        <fullName>Replication protein A 34 kDa subunit</fullName>
        <shortName>RP-A p34</shortName>
    </alternativeName>
</protein>
<gene>
    <name type="primary">rpa2</name>
    <name type="synonym">repa2</name>
    <name type="synonym">rpa32</name>
    <name type="synonym">rpa34</name>
</gene>
<dbReference type="EMBL" id="BC076661">
    <property type="protein sequence ID" value="AAH76661.1"/>
    <property type="molecule type" value="mRNA"/>
</dbReference>
<dbReference type="RefSeq" id="NP_001006795.1">
    <property type="nucleotide sequence ID" value="NM_001006794.1"/>
</dbReference>
<dbReference type="SMR" id="Q6DFS2"/>
<dbReference type="FunCoup" id="Q6DFS2">
    <property type="interactions" value="2961"/>
</dbReference>
<dbReference type="STRING" id="8364.ENSXETP00000039231"/>
<dbReference type="PaxDb" id="8364-ENSXETP00000061861"/>
<dbReference type="DNASU" id="448500"/>
<dbReference type="GeneID" id="448500"/>
<dbReference type="KEGG" id="xtr:448500"/>
<dbReference type="AGR" id="Xenbase:XB-GENE-487430"/>
<dbReference type="CTD" id="6118"/>
<dbReference type="Xenbase" id="XB-GENE-487430">
    <property type="gene designation" value="rpa2"/>
</dbReference>
<dbReference type="eggNOG" id="KOG3108">
    <property type="taxonomic scope" value="Eukaryota"/>
</dbReference>
<dbReference type="InParanoid" id="Q6DFS2"/>
<dbReference type="OMA" id="SFGNKRY"/>
<dbReference type="OrthoDB" id="25571at2759"/>
<dbReference type="Reactome" id="R-XTR-110312">
    <property type="pathway name" value="Translesion synthesis by REV1"/>
</dbReference>
<dbReference type="Reactome" id="R-XTR-110314">
    <property type="pathway name" value="Recognition of DNA damage by PCNA-containing replication complex"/>
</dbReference>
<dbReference type="Reactome" id="R-XTR-110320">
    <property type="pathway name" value="Translesion Synthesis by POLH"/>
</dbReference>
<dbReference type="Reactome" id="R-XTR-176187">
    <property type="pathway name" value="Activation of ATR in response to replication stress"/>
</dbReference>
<dbReference type="Reactome" id="R-XTR-5651801">
    <property type="pathway name" value="PCNA-Dependent Long Patch Base Excision Repair"/>
</dbReference>
<dbReference type="Reactome" id="R-XTR-5655862">
    <property type="pathway name" value="Translesion synthesis by POLK"/>
</dbReference>
<dbReference type="Reactome" id="R-XTR-5656121">
    <property type="pathway name" value="Translesion synthesis by POLI"/>
</dbReference>
<dbReference type="Reactome" id="R-XTR-5656169">
    <property type="pathway name" value="Termination of translesion DNA synthesis"/>
</dbReference>
<dbReference type="Reactome" id="R-XTR-5685938">
    <property type="pathway name" value="HDR through Single Strand Annealing (SSA)"/>
</dbReference>
<dbReference type="Reactome" id="R-XTR-5693607">
    <property type="pathway name" value="Processing of DNA double-strand break ends"/>
</dbReference>
<dbReference type="Reactome" id="R-XTR-5696397">
    <property type="pathway name" value="Gap-filling DNA repair synthesis and ligation in GG-NER"/>
</dbReference>
<dbReference type="Reactome" id="R-XTR-5696400">
    <property type="pathway name" value="Dual Incision in GG-NER"/>
</dbReference>
<dbReference type="Reactome" id="R-XTR-6782135">
    <property type="pathway name" value="Dual incision in TC-NER"/>
</dbReference>
<dbReference type="Reactome" id="R-XTR-6782210">
    <property type="pathway name" value="Gap-filling DNA repair synthesis and ligation in TC-NER"/>
</dbReference>
<dbReference type="Reactome" id="R-XTR-6804756">
    <property type="pathway name" value="Regulation of TP53 Activity through Phosphorylation"/>
</dbReference>
<dbReference type="Reactome" id="R-XTR-68962">
    <property type="pathway name" value="Activation of the pre-replicative complex"/>
</dbReference>
<dbReference type="Reactome" id="R-XTR-69473">
    <property type="pathway name" value="G2/M DNA damage checkpoint"/>
</dbReference>
<dbReference type="Proteomes" id="UP000008143">
    <property type="component" value="Chromosome 2"/>
</dbReference>
<dbReference type="GO" id="GO:0000785">
    <property type="term" value="C:chromatin"/>
    <property type="evidence" value="ECO:0000250"/>
    <property type="project" value="UniProtKB"/>
</dbReference>
<dbReference type="GO" id="GO:0005662">
    <property type="term" value="C:DNA replication factor A complex"/>
    <property type="evidence" value="ECO:0000250"/>
    <property type="project" value="UniProtKB"/>
</dbReference>
<dbReference type="GO" id="GO:0005634">
    <property type="term" value="C:nucleus"/>
    <property type="evidence" value="ECO:0000250"/>
    <property type="project" value="UniProtKB"/>
</dbReference>
<dbReference type="GO" id="GO:0016605">
    <property type="term" value="C:PML body"/>
    <property type="evidence" value="ECO:0000250"/>
    <property type="project" value="UniProtKB"/>
</dbReference>
<dbReference type="GO" id="GO:0003684">
    <property type="term" value="F:damaged DNA binding"/>
    <property type="evidence" value="ECO:0000250"/>
    <property type="project" value="UniProtKB"/>
</dbReference>
<dbReference type="GO" id="GO:0003697">
    <property type="term" value="F:single-stranded DNA binding"/>
    <property type="evidence" value="ECO:0000250"/>
    <property type="project" value="UniProtKB"/>
</dbReference>
<dbReference type="GO" id="GO:0006284">
    <property type="term" value="P:base-excision repair"/>
    <property type="evidence" value="ECO:0000250"/>
    <property type="project" value="UniProtKB"/>
</dbReference>
<dbReference type="GO" id="GO:0006260">
    <property type="term" value="P:DNA replication"/>
    <property type="evidence" value="ECO:0000250"/>
    <property type="project" value="UniProtKB"/>
</dbReference>
<dbReference type="GO" id="GO:0000076">
    <property type="term" value="P:DNA replication checkpoint signaling"/>
    <property type="evidence" value="ECO:0000250"/>
    <property type="project" value="UniProtKB"/>
</dbReference>
<dbReference type="GO" id="GO:0000724">
    <property type="term" value="P:double-strand break repair via homologous recombination"/>
    <property type="evidence" value="ECO:0000250"/>
    <property type="project" value="UniProtKB"/>
</dbReference>
<dbReference type="GO" id="GO:0006298">
    <property type="term" value="P:mismatch repair"/>
    <property type="evidence" value="ECO:0000250"/>
    <property type="project" value="UniProtKB"/>
</dbReference>
<dbReference type="GO" id="GO:0006289">
    <property type="term" value="P:nucleotide-excision repair"/>
    <property type="evidence" value="ECO:0000250"/>
    <property type="project" value="UniProtKB"/>
</dbReference>
<dbReference type="GO" id="GO:0034502">
    <property type="term" value="P:protein localization to chromosome"/>
    <property type="evidence" value="ECO:0000250"/>
    <property type="project" value="UniProtKB"/>
</dbReference>
<dbReference type="GO" id="GO:2000001">
    <property type="term" value="P:regulation of DNA damage checkpoint"/>
    <property type="evidence" value="ECO:0000250"/>
    <property type="project" value="UniProtKB"/>
</dbReference>
<dbReference type="GO" id="GO:0000723">
    <property type="term" value="P:telomere maintenance"/>
    <property type="evidence" value="ECO:0000250"/>
    <property type="project" value="UniProtKB"/>
</dbReference>
<dbReference type="CDD" id="cd04478">
    <property type="entry name" value="RPA2_DBD_D"/>
    <property type="match status" value="1"/>
</dbReference>
<dbReference type="FunFam" id="1.10.10.10:FF:000168">
    <property type="entry name" value="Replication protein A 32 kDa subunit"/>
    <property type="match status" value="1"/>
</dbReference>
<dbReference type="FunFam" id="2.40.50.140:FF:000149">
    <property type="entry name" value="Replication protein A 32 kDa subunit"/>
    <property type="match status" value="1"/>
</dbReference>
<dbReference type="Gene3D" id="2.40.50.140">
    <property type="entry name" value="Nucleic acid-binding proteins"/>
    <property type="match status" value="1"/>
</dbReference>
<dbReference type="Gene3D" id="1.10.10.10">
    <property type="entry name" value="Winged helix-like DNA-binding domain superfamily/Winged helix DNA-binding domain"/>
    <property type="match status" value="1"/>
</dbReference>
<dbReference type="InterPro" id="IPR012340">
    <property type="entry name" value="NA-bd_OB-fold"/>
</dbReference>
<dbReference type="InterPro" id="IPR040260">
    <property type="entry name" value="RFA2-like"/>
</dbReference>
<dbReference type="InterPro" id="IPR014646">
    <property type="entry name" value="Rfa2/RPA32"/>
</dbReference>
<dbReference type="InterPro" id="IPR014892">
    <property type="entry name" value="RPA_C"/>
</dbReference>
<dbReference type="InterPro" id="IPR036388">
    <property type="entry name" value="WH-like_DNA-bd_sf"/>
</dbReference>
<dbReference type="InterPro" id="IPR036390">
    <property type="entry name" value="WH_DNA-bd_sf"/>
</dbReference>
<dbReference type="PANTHER" id="PTHR13989">
    <property type="entry name" value="REPLICATION PROTEIN A-RELATED"/>
    <property type="match status" value="1"/>
</dbReference>
<dbReference type="PANTHER" id="PTHR13989:SF16">
    <property type="entry name" value="REPLICATION PROTEIN A2"/>
    <property type="match status" value="1"/>
</dbReference>
<dbReference type="Pfam" id="PF08784">
    <property type="entry name" value="RPA_C"/>
    <property type="match status" value="1"/>
</dbReference>
<dbReference type="PIRSF" id="PIRSF036949">
    <property type="entry name" value="RPA32"/>
    <property type="match status" value="1"/>
</dbReference>
<dbReference type="SUPFAM" id="SSF50249">
    <property type="entry name" value="Nucleic acid-binding proteins"/>
    <property type="match status" value="1"/>
</dbReference>
<dbReference type="SUPFAM" id="SSF46785">
    <property type="entry name" value="Winged helix' DNA-binding domain"/>
    <property type="match status" value="1"/>
</dbReference>
<comment type="function">
    <text evidence="2">As part of the heterotrimeric replication protein A complex (RPA/RP-A), binds and stabilizes single-stranded DNA intermediates, that form during DNA replication or upon DNA stress. It prevents their reannealing and in parallel, recruits and activates different proteins and complexes involved in DNA metabolism. Thereby, it plays an essential role both in DNA replication and the cellular response to DNA damage.</text>
</comment>
<comment type="subunit">
    <text evidence="1">Component of the replication protein A complex (RPA/RP-A), a heterotrimeric complex composed of RPA1, RPA2 and RPA3.</text>
</comment>
<comment type="subcellular location">
    <subcellularLocation>
        <location evidence="1">Nucleus</location>
    </subcellularLocation>
    <subcellularLocation>
        <location evidence="1">Nucleus</location>
        <location evidence="1">PML body</location>
    </subcellularLocation>
    <text evidence="1">Redistributes to discrete nuclear foci upon DNA damage in an ATR-dependent manner.</text>
</comment>
<comment type="PTM">
    <text evidence="1">Differentially phosphorylated throughout the cell cycle, becoming phosphorylated at the G1-S transition and dephosphorylated in late mitosis. Phosphorylation increases upon replication fork stalling (By similarity).</text>
</comment>
<comment type="similarity">
    <text evidence="4">Belongs to the replication factor A protein 2 family.</text>
</comment>
<organism>
    <name type="scientific">Xenopus tropicalis</name>
    <name type="common">Western clawed frog</name>
    <name type="synonym">Silurana tropicalis</name>
    <dbReference type="NCBI Taxonomy" id="8364"/>
    <lineage>
        <taxon>Eukaryota</taxon>
        <taxon>Metazoa</taxon>
        <taxon>Chordata</taxon>
        <taxon>Craniata</taxon>
        <taxon>Vertebrata</taxon>
        <taxon>Euteleostomi</taxon>
        <taxon>Amphibia</taxon>
        <taxon>Batrachia</taxon>
        <taxon>Anura</taxon>
        <taxon>Pipoidea</taxon>
        <taxon>Pipidae</taxon>
        <taxon>Xenopodinae</taxon>
        <taxon>Xenopus</taxon>
        <taxon>Silurana</taxon>
    </lineage>
</organism>
<accession>Q6DFS2</accession>
<proteinExistence type="evidence at transcript level"/>
<keyword id="KW-0227">DNA damage</keyword>
<keyword id="KW-0233">DNA recombination</keyword>
<keyword id="KW-0234">DNA repair</keyword>
<keyword id="KW-0235">DNA replication</keyword>
<keyword id="KW-0238">DNA-binding</keyword>
<keyword id="KW-0539">Nucleus</keyword>
<keyword id="KW-0597">Phosphoprotein</keyword>
<keyword id="KW-1185">Reference proteome</keyword>
<evidence type="ECO:0000250" key="1"/>
<evidence type="ECO:0000250" key="2">
    <source>
        <dbReference type="UniProtKB" id="P15927"/>
    </source>
</evidence>
<evidence type="ECO:0000256" key="3">
    <source>
        <dbReference type="SAM" id="MobiDB-lite"/>
    </source>
</evidence>
<evidence type="ECO:0000305" key="4"/>
<name>RFA2_XENTR</name>
<reference key="1">
    <citation type="submission" date="2004-07" db="EMBL/GenBank/DDBJ databases">
        <authorList>
            <consortium name="NIH - Xenopus Gene Collection (XGC) project"/>
        </authorList>
    </citation>
    <scope>NUCLEOTIDE SEQUENCE [LARGE SCALE MRNA]</scope>
    <source>
        <tissue>Embryo</tissue>
    </source>
</reference>
<sequence length="275" mass="29352">MWNNHGGFDGGYGGSGMGGGGYMQSPGGFGSPAPTQGEKKSRSRSQQIVPCTVSQLLSATQNDEMFRIGEAELSQVTIVGIVRHAEKAPTNILYKVDDMTAAPMDVRQWVDTDEASCENMVVPPGSYVKVAGHLRSFQNKKSVVAFKIAPVDDMNEFVSHMLEVVHAHMTMNSQGAPSGGGSAVALNTPGRLGDSGGAFSGGNDNATNGLTPHQSQILNLIKSFKGNEGMAFEELKNRLHGMNVNTIRQAVDFLSNEGHIYSTVDDEHYKSTDGD</sequence>
<feature type="chain" id="PRO_0000429836" description="Replication protein A 32 kDa subunit">
    <location>
        <begin position="1"/>
        <end position="275"/>
    </location>
</feature>
<feature type="DNA-binding region" description="OB">
    <location>
        <begin position="76"/>
        <end position="150"/>
    </location>
</feature>
<feature type="region of interest" description="Disordered" evidence="3">
    <location>
        <begin position="23"/>
        <end position="47"/>
    </location>
</feature>